<comment type="function">
    <text evidence="2 3 4 5 7">Responsible for the transport of C4-dicarboxylates during aerobic and anaerobic growth (PubMed:29995997, PubMed:7961398, PubMed:8131924, PubMed:8955408). Required for the uptake of L-aspartate as a nitrogen source during aerobic growth (PubMed:29995997). The uptake of L-aspartate in aerobic conditions is coupled to the excretion of fumarate, resulting in the net uptake of nitrogen without carbon uptake (PubMed:29995997). In addition, during anaerobic growth, catalyzes the uptake of fumarate, malate or aspartate coupled to the export of succinate (PubMed:7961398, PubMed:8955408). Can also catalyze the uptake (without exchange) of fumarate (PubMed:8955408). May play a a general role in anaerobic C4-dicarboxylate transport (PubMed:9852003).</text>
</comment>
<comment type="catalytic activity">
    <reaction evidence="2">
        <text>fumarate(in) + L-aspartate(out) = fumarate(out) + L-aspartate(in)</text>
        <dbReference type="Rhea" id="RHEA:72459"/>
        <dbReference type="ChEBI" id="CHEBI:29806"/>
        <dbReference type="ChEBI" id="CHEBI:29991"/>
    </reaction>
    <physiologicalReaction direction="left-to-right" evidence="2">
        <dbReference type="Rhea" id="RHEA:72460"/>
    </physiologicalReaction>
</comment>
<comment type="catalytic activity">
    <reaction evidence="3 5">
        <text>fumarate(in) + succinate(out) = fumarate(out) + succinate(in)</text>
        <dbReference type="Rhea" id="RHEA:29323"/>
        <dbReference type="ChEBI" id="CHEBI:29806"/>
        <dbReference type="ChEBI" id="CHEBI:30031"/>
    </reaction>
    <physiologicalReaction direction="right-to-left" evidence="3 5">
        <dbReference type="Rhea" id="RHEA:29325"/>
    </physiologicalReaction>
</comment>
<comment type="catalytic activity">
    <reaction evidence="3">
        <text>(S)-malate(in) + succinate(out) = (S)-malate(out) + succinate(in)</text>
        <dbReference type="Rhea" id="RHEA:29327"/>
        <dbReference type="ChEBI" id="CHEBI:15589"/>
        <dbReference type="ChEBI" id="CHEBI:30031"/>
    </reaction>
    <physiologicalReaction direction="right-to-left" evidence="3">
        <dbReference type="Rhea" id="RHEA:29329"/>
    </physiologicalReaction>
</comment>
<comment type="catalytic activity">
    <reaction evidence="3">
        <text>L-aspartate(in) + succinate(out) = L-aspartate(out) + succinate(in)</text>
        <dbReference type="Rhea" id="RHEA:29343"/>
        <dbReference type="ChEBI" id="CHEBI:29991"/>
        <dbReference type="ChEBI" id="CHEBI:30031"/>
    </reaction>
    <physiologicalReaction direction="right-to-left" evidence="3">
        <dbReference type="Rhea" id="RHEA:29345"/>
    </physiologicalReaction>
</comment>
<comment type="catalytic activity">
    <reaction evidence="5">
        <text>fumarate(out) + 3 H(+)(out) = fumarate(in) + 3 H(+)(in)</text>
        <dbReference type="Rhea" id="RHEA:72455"/>
        <dbReference type="ChEBI" id="CHEBI:15378"/>
        <dbReference type="ChEBI" id="CHEBI:29806"/>
    </reaction>
    <physiologicalReaction direction="left-to-right" evidence="5">
        <dbReference type="Rhea" id="RHEA:72456"/>
    </physiologicalReaction>
</comment>
<comment type="activity regulation">
    <text evidence="2 3 5">Active under aerobic and anaerobic conditions.</text>
</comment>
<comment type="biophysicochemical properties">
    <kinetics>
        <KM evidence="2">43.3 uM for L-aspartate</KM>
        <KM evidence="2">844 uM for succinate</KM>
    </kinetics>
</comment>
<comment type="subcellular location">
    <subcellularLocation>
        <location evidence="1 6">Cell inner membrane</location>
        <topology evidence="6">Multi-pass membrane protein</topology>
    </subcellularLocation>
</comment>
<comment type="induction">
    <text evidence="7">Expressed constitutively under both aerobic and anaerobic conditions (PubMed:9852003). Expression is only slightly affected by the growth conditions (PubMed:9852003).</text>
</comment>
<comment type="disruption phenotype">
    <text evidence="2 3 4 5">The growth the dcuA-dcuB double mutant is severely impaired during anaerobic growth with glycerol plus either fumarate, malate or aspartate, whereas single mutants are either unaffected or less affected, depending on the C4-dicarboxylate (PubMed:7961398, PubMed:8131924). The triple mutant dcuA-dcuB-dcuC is completely devoid of C4-dicarboxylate transport (exchange and uptake) during anaerobic growth, and the bacteria are no longer capable of growth by fumarate respiration (PubMed:8955408). Mutant cannot grow with L-aspartate as the nitrogen source (PubMed:29995997).</text>
</comment>
<comment type="similarity">
    <text evidence="10">Belongs to the DcuA/DcuB transporter (TC 2.A.13.1) family.</text>
</comment>
<comment type="sequence caution" evidence="10">
    <conflict type="frameshift">
        <sequence resource="EMBL-CDS" id="BAE78140"/>
    </conflict>
</comment>
<feature type="chain" id="PRO_0000170347" description="C4-dicarboxylate transporter DcuA">
    <location>
        <begin position="1"/>
        <end position="433"/>
    </location>
</feature>
<feature type="transmembrane region" description="Helical">
    <location>
        <begin position="1"/>
        <end position="18"/>
    </location>
</feature>
<feature type="topological domain" description="Cytoplasmic" evidence="6">
    <location>
        <position position="19"/>
    </location>
</feature>
<feature type="transmembrane region" description="Helical" evidence="11">
    <location>
        <begin position="20"/>
        <end position="37"/>
    </location>
</feature>
<feature type="topological domain" description="Periplasmic" evidence="6">
    <location>
        <begin position="38"/>
        <end position="53"/>
    </location>
</feature>
<feature type="transmembrane region" description="Helical" evidence="11">
    <location>
        <begin position="54"/>
        <end position="71"/>
    </location>
</feature>
<feature type="topological domain" description="Cytoplasmic" evidence="6">
    <location>
        <begin position="72"/>
        <end position="85"/>
    </location>
</feature>
<feature type="transmembrane region" description="Helical" evidence="11">
    <location>
        <begin position="86"/>
        <end position="103"/>
    </location>
</feature>
<feature type="topological domain" description="Periplasmic" evidence="6">
    <location>
        <begin position="104"/>
        <end position="132"/>
    </location>
</feature>
<feature type="transmembrane region" description="Helical" evidence="11">
    <location>
        <begin position="133"/>
        <end position="147"/>
    </location>
</feature>
<feature type="topological domain" description="Cytoplasmic" evidence="6">
    <location>
        <begin position="148"/>
        <end position="228"/>
    </location>
</feature>
<feature type="transmembrane region" description="Helical" evidence="11">
    <location>
        <begin position="229"/>
        <end position="246"/>
    </location>
</feature>
<feature type="topological domain" description="Periplasmic" evidence="6">
    <location>
        <begin position="247"/>
        <end position="264"/>
    </location>
</feature>
<feature type="transmembrane region" description="Helical" evidence="11">
    <location>
        <begin position="265"/>
        <end position="282"/>
    </location>
</feature>
<feature type="topological domain" description="Cytoplasmic" evidence="6">
    <location>
        <begin position="283"/>
        <end position="292"/>
    </location>
</feature>
<feature type="transmembrane region" description="Helical" evidence="11">
    <location>
        <begin position="293"/>
        <end position="310"/>
    </location>
</feature>
<feature type="topological domain" description="Periplasmic" evidence="6">
    <location>
        <begin position="311"/>
        <end position="332"/>
    </location>
</feature>
<feature type="transmembrane region" description="Helical" evidence="11">
    <location>
        <begin position="333"/>
        <end position="350"/>
    </location>
</feature>
<feature type="topological domain" description="Cytoplasmic" evidence="6">
    <location>
        <begin position="351"/>
        <end position="355"/>
    </location>
</feature>
<feature type="transmembrane region" description="Helical" evidence="11">
    <location>
        <begin position="356"/>
        <end position="373"/>
    </location>
</feature>
<feature type="topological domain" description="Periplasmic" evidence="1 6">
    <location>
        <begin position="374"/>
        <end position="433"/>
    </location>
</feature>
<feature type="sequence conflict" description="In Ref. 6; CAA26176." evidence="10" ref="6">
    <original>MP</original>
    <variation>IA</variation>
    <location>
        <begin position="355"/>
        <end position="356"/>
    </location>
</feature>
<feature type="sequence conflict" description="In Ref. 6." evidence="10" ref="6">
    <original>PLT</original>
    <variation>RXD</variation>
    <location>
        <begin position="365"/>
        <end position="367"/>
    </location>
</feature>
<organism>
    <name type="scientific">Escherichia coli (strain K12)</name>
    <dbReference type="NCBI Taxonomy" id="83333"/>
    <lineage>
        <taxon>Bacteria</taxon>
        <taxon>Pseudomonadati</taxon>
        <taxon>Pseudomonadota</taxon>
        <taxon>Gammaproteobacteria</taxon>
        <taxon>Enterobacterales</taxon>
        <taxon>Enterobacteriaceae</taxon>
        <taxon>Escherichia</taxon>
    </lineage>
</organism>
<keyword id="KW-0050">Antiport</keyword>
<keyword id="KW-0997">Cell inner membrane</keyword>
<keyword id="KW-1003">Cell membrane</keyword>
<keyword id="KW-0472">Membrane</keyword>
<keyword id="KW-1185">Reference proteome</keyword>
<keyword id="KW-0769">Symport</keyword>
<keyword id="KW-0812">Transmembrane</keyword>
<keyword id="KW-1133">Transmembrane helix</keyword>
<keyword id="KW-0813">Transport</keyword>
<reference key="1">
    <citation type="journal article" date="1993" name="Biochem. Soc. Trans.">
        <title>Construction and properties of Escherichia coli mutants defective in two genes encoding homologous membrane proteins with putative roles in anaerobic C4-dicarboxylic acid transport.</title>
        <authorList>
            <person name="Six S."/>
            <person name="Andrews S.C."/>
            <person name="Roberts R.E."/>
            <person name="Unden G."/>
            <person name="Guest J.R."/>
        </authorList>
    </citation>
    <scope>NUCLEOTIDE SEQUENCE [GENOMIC DNA]</scope>
    <scope>FUNCTION</scope>
    <scope>DISRUPTION PHENOTYPE</scope>
    <source>
        <strain>K12</strain>
    </source>
</reference>
<reference key="2">
    <citation type="journal article" date="1994" name="J. Bacteriol.">
        <title>Escherichia coli possesses two homologous anaerobic C4-dicarboxylate membrane transporters (DcuA and DcuB) distinct from the aerobic dicarboxylate transport system (Dct).</title>
        <authorList>
            <person name="Six S."/>
            <person name="Andrews S.C."/>
            <person name="Unden G."/>
            <person name="Guest J.R."/>
        </authorList>
    </citation>
    <scope>NUCLEOTIDE SEQUENCE [GENOMIC DNA]</scope>
    <scope>FUNCTION</scope>
    <scope>CATALYTIC ACTIVITY</scope>
    <scope>ACTIVITY REGULATION</scope>
    <scope>DISRUPTION PHENOTYPE</scope>
    <source>
        <strain>K12</strain>
    </source>
</reference>
<reference key="3">
    <citation type="journal article" date="1995" name="Nucleic Acids Res.">
        <title>Analysis of the Escherichia coli genome VI: DNA sequence of the region from 92.8 through 100 minutes.</title>
        <authorList>
            <person name="Burland V.D."/>
            <person name="Plunkett G. III"/>
            <person name="Sofia H.J."/>
            <person name="Daniels D.L."/>
            <person name="Blattner F.R."/>
        </authorList>
    </citation>
    <scope>NUCLEOTIDE SEQUENCE [LARGE SCALE GENOMIC DNA]</scope>
    <source>
        <strain>K12 / MG1655 / ATCC 47076</strain>
    </source>
</reference>
<reference key="4">
    <citation type="journal article" date="1997" name="Science">
        <title>The complete genome sequence of Escherichia coli K-12.</title>
        <authorList>
            <person name="Blattner F.R."/>
            <person name="Plunkett G. III"/>
            <person name="Bloch C.A."/>
            <person name="Perna N.T."/>
            <person name="Burland V."/>
            <person name="Riley M."/>
            <person name="Collado-Vides J."/>
            <person name="Glasner J.D."/>
            <person name="Rode C.K."/>
            <person name="Mayhew G.F."/>
            <person name="Gregor J."/>
            <person name="Davis N.W."/>
            <person name="Kirkpatrick H.A."/>
            <person name="Goeden M.A."/>
            <person name="Rose D.J."/>
            <person name="Mau B."/>
            <person name="Shao Y."/>
        </authorList>
    </citation>
    <scope>NUCLEOTIDE SEQUENCE [LARGE SCALE GENOMIC DNA]</scope>
    <source>
        <strain>K12 / MG1655 / ATCC 47076</strain>
    </source>
</reference>
<reference key="5">
    <citation type="journal article" date="2006" name="Mol. Syst. Biol.">
        <title>Highly accurate genome sequences of Escherichia coli K-12 strains MG1655 and W3110.</title>
        <authorList>
            <person name="Hayashi K."/>
            <person name="Morooka N."/>
            <person name="Yamamoto Y."/>
            <person name="Fujita K."/>
            <person name="Isono K."/>
            <person name="Choi S."/>
            <person name="Ohtsubo E."/>
            <person name="Baba T."/>
            <person name="Wanner B.L."/>
            <person name="Mori H."/>
            <person name="Horiuchi T."/>
        </authorList>
    </citation>
    <scope>NUCLEOTIDE SEQUENCE [LARGE SCALE GENOMIC DNA]</scope>
    <source>
        <strain>K12 / W3110 / ATCC 27325 / DSM 5911</strain>
    </source>
</reference>
<reference key="6">
    <citation type="journal article" date="1985" name="Nucleic Acids Res.">
        <title>Cloning and nucleotide sequence of the aspartase gene of Escherichia coli W.</title>
        <authorList>
            <person name="Takagi J.S."/>
            <person name="Ida N."/>
            <person name="Tokushige M."/>
            <person name="Sakamoto H."/>
            <person name="Shimura Y."/>
        </authorList>
    </citation>
    <scope>NUCLEOTIDE SEQUENCE [GENOMIC DNA] OF 1-412</scope>
    <source>
        <strain>W / ATCC 11105 / DSM 1900</strain>
    </source>
</reference>
<reference key="7">
    <citation type="journal article" date="1986" name="Biochem. J.">
        <title>Structural and functional relationships between fumarase and aspartase. Nucleotide sequences of the fumarase (fumC) and aspartase (aspA) genes of Escherichia coli K12.</title>
        <authorList>
            <person name="Woods S.A."/>
            <person name="Miles J.S."/>
            <person name="Roberts R.E."/>
            <person name="Guest J.R."/>
        </authorList>
    </citation>
    <scope>NUCLEOTIDE SEQUENCE [GENOMIC DNA] OF 1-264</scope>
    <source>
        <strain>K12</strain>
    </source>
</reference>
<reference key="8">
    <citation type="journal article" date="1989" name="J. Bacteriol.">
        <title>Nucleotide sequence of the FNR-regulated fumarase gene (fumB) of Escherichia coli K-12.</title>
        <authorList>
            <person name="Bell P.J."/>
            <person name="Andrews S.C."/>
            <person name="Sivak M.N."/>
            <person name="Guest J.R."/>
        </authorList>
    </citation>
    <scope>SEQUENCE REVISION</scope>
</reference>
<reference key="9">
    <citation type="journal article" date="1996" name="J. Bacteriol.">
        <title>Identification of a third secondary carrier (DcuC) for anaerobic C4-dicarboxylate transport in Escherichia coli: roles of the three Dcu carriers in uptake and exchange.</title>
        <authorList>
            <person name="Zientz E."/>
            <person name="Six S."/>
            <person name="Unden G."/>
        </authorList>
    </citation>
    <scope>FUNCTION</scope>
    <scope>CATALYTIC ACTIVITY</scope>
    <scope>ACTIVITY REGULATION</scope>
    <scope>DISRUPTION PHENOTYPE</scope>
    <source>
        <strain>K12 / AN387</strain>
    </source>
</reference>
<reference key="10">
    <citation type="journal article" date="1998" name="J. Bacteriol.">
        <title>Topological analysis of DcuA, an anaerobic C4-dicarboxylate transporter of Escherichia coli.</title>
        <authorList>
            <person name="Golby P."/>
            <person name="Kelly D.J."/>
            <person name="Guest J.R."/>
            <person name="Andrews S.C."/>
        </authorList>
    </citation>
    <scope>SUBCELLULAR LOCATION</scope>
    <scope>TOPOLOGY</scope>
</reference>
<reference key="11">
    <citation type="journal article" date="1998" name="J. Bacteriol.">
        <title>Transcriptional regulation and organization of the dcuA and dcuB genes, encoding homologous anaerobic C4-dicarboxylate transporters in Escherichia coli.</title>
        <authorList>
            <person name="Golby P."/>
            <person name="Kelly D.J."/>
            <person name="Guest J.R."/>
            <person name="Andrews S.C."/>
        </authorList>
    </citation>
    <scope>FUNCTION</scope>
    <scope>INDUCTION</scope>
    <source>
        <strain>K12 / MC4100 / ATCC 35695 / DSM 6574</strain>
    </source>
</reference>
<reference key="12">
    <citation type="journal article" date="2005" name="Science">
        <title>Global topology analysis of the Escherichia coli inner membrane proteome.</title>
        <authorList>
            <person name="Daley D.O."/>
            <person name="Rapp M."/>
            <person name="Granseth E."/>
            <person name="Melen K."/>
            <person name="Drew D."/>
            <person name="von Heijne G."/>
        </authorList>
    </citation>
    <scope>TOPOLOGY [LARGE SCALE ANALYSIS]</scope>
    <scope>SUBCELLULAR LOCATION</scope>
    <source>
        <strain>K12 / MG1655 / ATCC 47076</strain>
    </source>
</reference>
<reference key="13">
    <citation type="journal article" date="2018" name="Mol. Microbiol.">
        <title>DcuA of aerobically grown Escherichia coli serves as a nitrogen shuttle (L-aspartate/fumarate) for nitrogen uptake.</title>
        <authorList>
            <person name="Strecker A."/>
            <person name="Schubert C."/>
            <person name="Zedler S."/>
            <person name="Steinmetz P."/>
            <person name="Unden G."/>
        </authorList>
    </citation>
    <scope>FUNCTION</scope>
    <scope>CATALYTIC ACTIVITY</scope>
    <scope>ACTIVITY REGULATION</scope>
    <scope>BIOPHYSICOCHEMICAL PROPERTIES</scope>
    <scope>DISRUPTION PHENOTYPE</scope>
</reference>
<proteinExistence type="evidence at protein level"/>
<protein>
    <recommendedName>
        <fullName evidence="10">C4-dicarboxylate transporter DcuA</fullName>
    </recommendedName>
</protein>
<dbReference type="EMBL" id="X79887">
    <property type="protein sequence ID" value="CAA56259.1"/>
    <property type="molecule type" value="Genomic_DNA"/>
</dbReference>
<dbReference type="EMBL" id="U14003">
    <property type="protein sequence ID" value="AAA97037.1"/>
    <property type="molecule type" value="Genomic_DNA"/>
</dbReference>
<dbReference type="EMBL" id="U00096">
    <property type="protein sequence ID" value="AAC77098.1"/>
    <property type="molecule type" value="Genomic_DNA"/>
</dbReference>
<dbReference type="EMBL" id="AP009048">
    <property type="protein sequence ID" value="BAE78140.1"/>
    <property type="status" value="ALT_FRAME"/>
    <property type="molecule type" value="Genomic_DNA"/>
</dbReference>
<dbReference type="EMBL" id="X02307">
    <property type="protein sequence ID" value="CAA26176.1"/>
    <property type="status" value="ALT_SEQ"/>
    <property type="molecule type" value="Genomic_DNA"/>
</dbReference>
<dbReference type="EMBL" id="X04066">
    <property type="protein sequence ID" value="CAA27702.1"/>
    <property type="molecule type" value="Genomic_DNA"/>
</dbReference>
<dbReference type="PIR" id="S56366">
    <property type="entry name" value="QQEC94"/>
</dbReference>
<dbReference type="RefSeq" id="NP_418561.1">
    <property type="nucleotide sequence ID" value="NC_000913.3"/>
</dbReference>
<dbReference type="RefSeq" id="WP_000961959.1">
    <property type="nucleotide sequence ID" value="NZ_STEB01000014.1"/>
</dbReference>
<dbReference type="SMR" id="P0ABN5"/>
<dbReference type="BioGRID" id="4261707">
    <property type="interactions" value="13"/>
</dbReference>
<dbReference type="FunCoup" id="P0ABN5">
    <property type="interactions" value="15"/>
</dbReference>
<dbReference type="STRING" id="511145.b4138"/>
<dbReference type="TCDB" id="2.A.13.1.1">
    <property type="family name" value="the c4-dicarboxylate uptake (dcu) family"/>
</dbReference>
<dbReference type="jPOST" id="P0ABN5"/>
<dbReference type="PaxDb" id="511145-b4138"/>
<dbReference type="EnsemblBacteria" id="AAC77098">
    <property type="protein sequence ID" value="AAC77098"/>
    <property type="gene ID" value="b4138"/>
</dbReference>
<dbReference type="GeneID" id="93777686"/>
<dbReference type="GeneID" id="948659"/>
<dbReference type="KEGG" id="ecj:JW5735"/>
<dbReference type="KEGG" id="eco:b4138"/>
<dbReference type="KEGG" id="ecoc:C3026_22365"/>
<dbReference type="PATRIC" id="fig|1411691.4.peg.2562"/>
<dbReference type="EchoBASE" id="EB1207"/>
<dbReference type="eggNOG" id="COG2704">
    <property type="taxonomic scope" value="Bacteria"/>
</dbReference>
<dbReference type="HOGENOM" id="CLU_036056_1_1_6"/>
<dbReference type="InParanoid" id="P0ABN5"/>
<dbReference type="OMA" id="FDHAFLI"/>
<dbReference type="OrthoDB" id="9770910at2"/>
<dbReference type="PhylomeDB" id="P0ABN5"/>
<dbReference type="BioCyc" id="EcoCyc:DCUA-MONOMER"/>
<dbReference type="BioCyc" id="MetaCyc:DCUA-MONOMER"/>
<dbReference type="PRO" id="PR:P0ABN5"/>
<dbReference type="Proteomes" id="UP000000625">
    <property type="component" value="Chromosome"/>
</dbReference>
<dbReference type="GO" id="GO:0005886">
    <property type="term" value="C:plasma membrane"/>
    <property type="evidence" value="ECO:0000314"/>
    <property type="project" value="EcoCyc"/>
</dbReference>
<dbReference type="GO" id="GO:0015556">
    <property type="term" value="F:C4-dicarboxylate transmembrane transporter activity"/>
    <property type="evidence" value="ECO:0000314"/>
    <property type="project" value="EcoCyc"/>
</dbReference>
<dbReference type="GO" id="GO:0005469">
    <property type="term" value="F:succinate:fumarate antiporter activity"/>
    <property type="evidence" value="ECO:0000314"/>
    <property type="project" value="EcoCyc"/>
</dbReference>
<dbReference type="GO" id="GO:0015293">
    <property type="term" value="F:symporter activity"/>
    <property type="evidence" value="ECO:0007669"/>
    <property type="project" value="UniProtKB-KW"/>
</dbReference>
<dbReference type="GO" id="GO:0009061">
    <property type="term" value="P:anaerobic respiration"/>
    <property type="evidence" value="ECO:0000269"/>
    <property type="project" value="EcoCyc"/>
</dbReference>
<dbReference type="GO" id="GO:0015740">
    <property type="term" value="P:C4-dicarboxylate transport"/>
    <property type="evidence" value="ECO:0000314"/>
    <property type="project" value="EcoCyc"/>
</dbReference>
<dbReference type="GO" id="GO:0140009">
    <property type="term" value="P:L-aspartate import across plasma membrane"/>
    <property type="evidence" value="ECO:0000314"/>
    <property type="project" value="EcoCyc"/>
</dbReference>
<dbReference type="InterPro" id="IPR004668">
    <property type="entry name" value="Anaer_Dcu_memb_transpt"/>
</dbReference>
<dbReference type="NCBIfam" id="TIGR00770">
    <property type="entry name" value="Dcu"/>
    <property type="match status" value="1"/>
</dbReference>
<dbReference type="NCBIfam" id="NF006927">
    <property type="entry name" value="PRK09412.1"/>
    <property type="match status" value="1"/>
</dbReference>
<dbReference type="NCBIfam" id="NF009136">
    <property type="entry name" value="PRK12489.1"/>
    <property type="match status" value="1"/>
</dbReference>
<dbReference type="PANTHER" id="PTHR36106">
    <property type="entry name" value="ANAEROBIC C4-DICARBOXYLATE TRANSPORTER DCUB"/>
    <property type="match status" value="1"/>
</dbReference>
<dbReference type="PANTHER" id="PTHR36106:SF2">
    <property type="entry name" value="C4-DICARBOXYLATE TRANSPORTER DCUA"/>
    <property type="match status" value="1"/>
</dbReference>
<dbReference type="Pfam" id="PF03605">
    <property type="entry name" value="DcuA_DcuB"/>
    <property type="match status" value="1"/>
</dbReference>
<dbReference type="PIRSF" id="PIRSF004539">
    <property type="entry name" value="C4-dicrbxl_trns"/>
    <property type="match status" value="1"/>
</dbReference>
<accession>P0ABN5</accession>
<accession>P04539</accession>
<accession>Q2M6G6</accession>
<gene>
    <name evidence="8" type="primary">dcuA</name>
    <name evidence="9" type="synonym">genA</name>
    <name type="ordered locus">b4138</name>
    <name type="ordered locus">JW5735</name>
</gene>
<sequence>MLVVELIIVLLAIFLGARLGGIGIGFAGGLGVLVLAAIGVKPGNIPFDVISIIMAVIAAISAMQVAGGLDYLVHQTEKLLRRNPKYITILAPIVTYFLTIFAGTGNISLATLPVIAEVAKEQGVKPCRPLSTAVVSAQIAITASPISAAVVYMSSVMEGHGISYLHLLSVVIPSTLLAVLVMSFLVTMLFNSKLSDDPIYRKRLEEGLVELRGEKQIEIKSGAKTSVWLFLLGVVGVVIYAIINSPSMGLVEKPLMNTTNAILIIMLSVATLTTVICKVDTDNILNSSTFKAGMSACICILGVAWLGDTFVSNNIDWIKDTAGEVIQGHPWLLAVIFFFASALLYSQAATAKALMPMALALNVSPLTAVASFAAVSGLFILPTYPTLVAAVQMDDTGTTRIGKFVFNHPFFIPGTLGVALAVCFGFVLGSFML</sequence>
<evidence type="ECO:0000269" key="1">
    <source>
    </source>
</evidence>
<evidence type="ECO:0000269" key="2">
    <source>
    </source>
</evidence>
<evidence type="ECO:0000269" key="3">
    <source>
    </source>
</evidence>
<evidence type="ECO:0000269" key="4">
    <source>
    </source>
</evidence>
<evidence type="ECO:0000269" key="5">
    <source>
    </source>
</evidence>
<evidence type="ECO:0000269" key="6">
    <source>
    </source>
</evidence>
<evidence type="ECO:0000269" key="7">
    <source>
    </source>
</evidence>
<evidence type="ECO:0000303" key="8">
    <source>
    </source>
</evidence>
<evidence type="ECO:0000303" key="9">
    <source>
    </source>
</evidence>
<evidence type="ECO:0000305" key="10"/>
<evidence type="ECO:0000305" key="11">
    <source>
    </source>
</evidence>
<name>DCUA_ECOLI</name>